<feature type="chain" id="PRO_0000404174" description="Non-structural protein 1">
    <location>
        <begin position="1"/>
        <end position="742"/>
    </location>
</feature>
<feature type="region of interest" description="Disordered" evidence="3">
    <location>
        <begin position="14"/>
        <end position="46"/>
    </location>
</feature>
<feature type="region of interest" description="Disordered" evidence="3">
    <location>
        <begin position="230"/>
        <end position="268"/>
    </location>
</feature>
<feature type="coiled-coil region" evidence="2">
    <location>
        <begin position="635"/>
        <end position="700"/>
    </location>
</feature>
<feature type="compositionally biased region" description="Low complexity" evidence="3">
    <location>
        <begin position="20"/>
        <end position="46"/>
    </location>
</feature>
<feature type="compositionally biased region" description="Low complexity" evidence="3">
    <location>
        <begin position="238"/>
        <end position="258"/>
    </location>
</feature>
<name>VNS1_AQRVC</name>
<evidence type="ECO:0000250" key="1"/>
<evidence type="ECO:0000255" key="2"/>
<evidence type="ECO:0000256" key="3">
    <source>
        <dbReference type="SAM" id="MobiDB-lite"/>
    </source>
</evidence>
<evidence type="ECO:0000305" key="4"/>
<proteinExistence type="inferred from homology"/>
<accession>Q8JU59</accession>
<organism>
    <name type="scientific">Aquareovirus C (isolate Golden shiner/USA/GSRV/1977)</name>
    <name type="common">AQRV-C</name>
    <dbReference type="NCBI Taxonomy" id="185783"/>
    <lineage>
        <taxon>Viruses</taxon>
        <taxon>Riboviria</taxon>
        <taxon>Orthornavirae</taxon>
        <taxon>Duplornaviricota</taxon>
        <taxon>Resentoviricetes</taxon>
        <taxon>Reovirales</taxon>
        <taxon>Spinareoviridae</taxon>
        <taxon>Aquareovirus</taxon>
        <taxon>Aquareovirus ctenopharyngodontis</taxon>
    </lineage>
</organism>
<sequence length="742" mass="79460">MARRITLNSLKPLSAMSNHPSLTPTTTPTAATASTSTAPSIDSSTAPSLPSTFNQMIFEFNGVKYTGAPHAWMMPYRGFEQHMVNMVIETRPDATFSRFDDLLSAIVTALAVNGITATTSLTDGELVLLRFADLATRHASLPSPSPAISDWSQSVPGPLLDTLEYGAPLIPAEPTATPAPTPLAPADYPPPPPHVADPAVSHSLVALDVPDAALPSMPRASTSTASIPSLMSLPIASPPRSRSSTLSSSTSTSTPRLPGTVVPRRPSHIADDETYNRSRAAYAMGVPAMSPMYCTGKERHFEQTFYSAYPHAANGVWTAYQHSIILIAAPTEDISLLTLHNVEREQSATEAYHLRALDGATVARVAVFRLAPTMTCHDVHAMMAGHNVVSISGLAAAFMIRHKLTDGVFSKSFRRIVMGIDPVMMRHDPVPLHLFAILTDHRLDHAATHAVMSMRLALMQIESASYQATKAWLRGHLPVTIFASATTDSSSDSIHATILEADKGMRVADTPGSSTLRELEASNTALQRQVIDMDVQINALLRTISDLKSYTNHQQASHGYSIQQYLHSHTCVNTQELPLIQSVMGDQAANAIQAMRTHANEAARSALTDKVTAPLTAQLSDTMAHLHEARAHNGDLTAQLAIAETDAMTAANERDRACELAVELESQLATMQREYDQTTRALLQDNEQLQHSAATAEAAAVSAFRPTPPLTYGTAPSALPAVGPGLTVPLLAAAIDPASLLL</sequence>
<dbReference type="EMBL" id="AF403401">
    <property type="protein sequence ID" value="AAM92747.1"/>
    <property type="molecule type" value="Genomic_RNA"/>
</dbReference>
<dbReference type="RefSeq" id="NP_938063.1">
    <property type="nucleotide sequence ID" value="NC_005169.1"/>
</dbReference>
<dbReference type="KEGG" id="vg:2648332"/>
<dbReference type="Proteomes" id="UP000006713">
    <property type="component" value="Genome"/>
</dbReference>
<dbReference type="GO" id="GO:0003723">
    <property type="term" value="F:RNA binding"/>
    <property type="evidence" value="ECO:0007669"/>
    <property type="project" value="UniProtKB-KW"/>
</dbReference>
<keyword id="KW-0175">Coiled coil</keyword>
<keyword id="KW-1185">Reference proteome</keyword>
<keyword id="KW-0694">RNA-binding</keyword>
<organismHost>
    <name type="scientific">Notemigonus crysoleucas</name>
    <name type="common">Golden shiner</name>
    <name type="synonym">Cyprinus crysoleucas</name>
    <dbReference type="NCBI Taxonomy" id="28800"/>
</organismHost>
<organismHost>
    <name type="scientific">Pimephales promelas</name>
    <name type="common">Fathead minnow</name>
    <dbReference type="NCBI Taxonomy" id="90988"/>
</organismHost>
<reference key="1">
    <citation type="journal article" date="2002" name="J. Gen. Virol.">
        <title>Common evolutionary origin of aquareoviruses and orthoreoviruses revealed by genome characterization of Golden shiner reovirus, Grass carp reovirus, Striped bass reovirus and golden ide reovirus (genus Aquareovirus, family Reoviridae).</title>
        <authorList>
            <person name="Attoui H."/>
            <person name="Fang Q."/>
            <person name="Mohd Jaafar F."/>
            <person name="Cantaloube J.F."/>
            <person name="Biagini P."/>
            <person name="de Micco P."/>
            <person name="de Lamballerie X."/>
        </authorList>
    </citation>
    <scope>NUCLEOTIDE SEQUENCE [GENOMIC RNA]</scope>
</reference>
<gene>
    <name type="primary">S4</name>
</gene>
<protein>
    <recommendedName>
        <fullName>Non-structural protein 1</fullName>
        <shortName>NS1</shortName>
    </recommendedName>
</protein>
<comment type="function">
    <text evidence="1">Non-structural protein with ssRNA-binding activity. Is probably involved in the formation of viral inclusions, where the assembly of cores and the replication of viral RNA are thought to occur (By similarity).</text>
</comment>
<comment type="similarity">
    <text evidence="4">Belongs to the aquareoviridae NS1 protein family.</text>
</comment>